<sequence>MMTYQEIFNEIKNKAYFKNHRHVLIAVSGGVDSMNLLHFLYLFQDKLKIRIGIAHVNHKQRSESDSEEAYLKCWAKKHDIPIYVSNFEGIFSEKAARDWRYAFFKSIMLKNNYSALVTAHHSDDQAETILMRLIRGSRLRHLSGIKSVQPFANGQLIRPFLTFSKKDLPEIFHFEDSSNRELSFLRNRVRNNYLPLLKQENPRFIQGLNQLALENSLLFQAFKELTNHITTTDLTEFNEQSKSIQYFLLQDYLEGFPDLDLKKSQFTQLLQIIQTAKQGYYYLKKDYYIFIDKFSFKITKIVPKTELVKDEKMLEYDSNLCYRDYCFSFMPKSNEDQGQVSIPLFSLSSIKLRSRQSGDYISFGHFSKKIRRLFIDEKFTIAERQNAIIGEQDEQIIFVLIGNKTYLRKACKHDIMLAKLYIDKLEKG</sequence>
<evidence type="ECO:0000255" key="1">
    <source>
        <dbReference type="HAMAP-Rule" id="MF_01161"/>
    </source>
</evidence>
<feature type="chain" id="PRO_0000411590" description="tRNA(Ile)-lysidine synthase">
    <location>
        <begin position="1"/>
        <end position="428"/>
    </location>
</feature>
<feature type="binding site" evidence="1">
    <location>
        <begin position="28"/>
        <end position="33"/>
    </location>
    <ligand>
        <name>ATP</name>
        <dbReference type="ChEBI" id="CHEBI:30616"/>
    </ligand>
</feature>
<comment type="function">
    <text evidence="1">Ligates lysine onto the cytidine present at position 34 of the AUA codon-specific tRNA(Ile) that contains the anticodon CAU, in an ATP-dependent manner. Cytidine is converted to lysidine, thus changing the amino acid specificity of the tRNA from methionine to isoleucine.</text>
</comment>
<comment type="catalytic activity">
    <reaction evidence="1">
        <text>cytidine(34) in tRNA(Ile2) + L-lysine + ATP = lysidine(34) in tRNA(Ile2) + AMP + diphosphate + H(+)</text>
        <dbReference type="Rhea" id="RHEA:43744"/>
        <dbReference type="Rhea" id="RHEA-COMP:10625"/>
        <dbReference type="Rhea" id="RHEA-COMP:10670"/>
        <dbReference type="ChEBI" id="CHEBI:15378"/>
        <dbReference type="ChEBI" id="CHEBI:30616"/>
        <dbReference type="ChEBI" id="CHEBI:32551"/>
        <dbReference type="ChEBI" id="CHEBI:33019"/>
        <dbReference type="ChEBI" id="CHEBI:82748"/>
        <dbReference type="ChEBI" id="CHEBI:83665"/>
        <dbReference type="ChEBI" id="CHEBI:456215"/>
        <dbReference type="EC" id="6.3.4.19"/>
    </reaction>
</comment>
<comment type="subcellular location">
    <subcellularLocation>
        <location evidence="1">Cytoplasm</location>
    </subcellularLocation>
</comment>
<comment type="domain">
    <text>The N-terminal region contains the highly conserved SGGXDS motif, predicted to be a P-loop motif involved in ATP binding.</text>
</comment>
<comment type="similarity">
    <text evidence="1">Belongs to the tRNA(Ile)-lysidine synthase family.</text>
</comment>
<protein>
    <recommendedName>
        <fullName evidence="1">tRNA(Ile)-lysidine synthase</fullName>
        <ecNumber evidence="1">6.3.4.19</ecNumber>
    </recommendedName>
    <alternativeName>
        <fullName evidence="1">tRNA(Ile)-2-lysyl-cytidine synthase</fullName>
    </alternativeName>
    <alternativeName>
        <fullName evidence="1">tRNA(Ile)-lysidine synthetase</fullName>
    </alternativeName>
</protein>
<reference key="1">
    <citation type="journal article" date="2003" name="Genome Res.">
        <title>Genome sequence of an M3 strain of Streptococcus pyogenes reveals a large-scale genomic rearrangement in invasive strains and new insights into phage evolution.</title>
        <authorList>
            <person name="Nakagawa I."/>
            <person name="Kurokawa K."/>
            <person name="Yamashita A."/>
            <person name="Nakata M."/>
            <person name="Tomiyasu Y."/>
            <person name="Okahashi N."/>
            <person name="Kawabata S."/>
            <person name="Yamazaki K."/>
            <person name="Shiba T."/>
            <person name="Yasunaga T."/>
            <person name="Hayashi H."/>
            <person name="Hattori M."/>
            <person name="Hamada S."/>
        </authorList>
    </citation>
    <scope>NUCLEOTIDE SEQUENCE [LARGE SCALE GENOMIC DNA]</scope>
    <source>
        <strain>SSI-1</strain>
    </source>
</reference>
<keyword id="KW-0067">ATP-binding</keyword>
<keyword id="KW-0963">Cytoplasm</keyword>
<keyword id="KW-0436">Ligase</keyword>
<keyword id="KW-0547">Nucleotide-binding</keyword>
<keyword id="KW-0819">tRNA processing</keyword>
<organism>
    <name type="scientific">Streptococcus pyogenes serotype M3 (strain SSI-1)</name>
    <dbReference type="NCBI Taxonomy" id="193567"/>
    <lineage>
        <taxon>Bacteria</taxon>
        <taxon>Bacillati</taxon>
        <taxon>Bacillota</taxon>
        <taxon>Bacilli</taxon>
        <taxon>Lactobacillales</taxon>
        <taxon>Streptococcaceae</taxon>
        <taxon>Streptococcus</taxon>
    </lineage>
</organism>
<name>TILS_STRPQ</name>
<proteinExistence type="inferred from homology"/>
<gene>
    <name evidence="1" type="primary">tilS</name>
    <name type="ordered locus">SPs0011</name>
</gene>
<accession>P0DG01</accession>
<accession>Q879R7</accession>
<accession>Q8K8Z3</accession>
<dbReference type="EC" id="6.3.4.19" evidence="1"/>
<dbReference type="EMBL" id="BA000034">
    <property type="protein sequence ID" value="BAC63106.1"/>
    <property type="molecule type" value="Genomic_DNA"/>
</dbReference>
<dbReference type="RefSeq" id="WP_011106565.1">
    <property type="nucleotide sequence ID" value="NC_004606.1"/>
</dbReference>
<dbReference type="SMR" id="P0DG01"/>
<dbReference type="GeneID" id="69899962"/>
<dbReference type="KEGG" id="sps:SPs0011"/>
<dbReference type="HOGENOM" id="CLU_018869_0_2_9"/>
<dbReference type="GO" id="GO:0005737">
    <property type="term" value="C:cytoplasm"/>
    <property type="evidence" value="ECO:0007669"/>
    <property type="project" value="UniProtKB-SubCell"/>
</dbReference>
<dbReference type="GO" id="GO:0005524">
    <property type="term" value="F:ATP binding"/>
    <property type="evidence" value="ECO:0007669"/>
    <property type="project" value="UniProtKB-UniRule"/>
</dbReference>
<dbReference type="GO" id="GO:0032267">
    <property type="term" value="F:tRNA(Ile)-lysidine synthase activity"/>
    <property type="evidence" value="ECO:0007669"/>
    <property type="project" value="UniProtKB-EC"/>
</dbReference>
<dbReference type="GO" id="GO:0006400">
    <property type="term" value="P:tRNA modification"/>
    <property type="evidence" value="ECO:0007669"/>
    <property type="project" value="UniProtKB-UniRule"/>
</dbReference>
<dbReference type="CDD" id="cd01992">
    <property type="entry name" value="TilS_N"/>
    <property type="match status" value="1"/>
</dbReference>
<dbReference type="Gene3D" id="3.40.50.620">
    <property type="entry name" value="HUPs"/>
    <property type="match status" value="1"/>
</dbReference>
<dbReference type="HAMAP" id="MF_01161">
    <property type="entry name" value="tRNA_Ile_lys_synt"/>
    <property type="match status" value="1"/>
</dbReference>
<dbReference type="InterPro" id="IPR012796">
    <property type="entry name" value="Lysidine-tRNA-synth_C"/>
</dbReference>
<dbReference type="InterPro" id="IPR014729">
    <property type="entry name" value="Rossmann-like_a/b/a_fold"/>
</dbReference>
<dbReference type="InterPro" id="IPR011063">
    <property type="entry name" value="TilS/TtcA_N"/>
</dbReference>
<dbReference type="InterPro" id="IPR012094">
    <property type="entry name" value="tRNA_Ile_lys_synt"/>
</dbReference>
<dbReference type="InterPro" id="IPR012795">
    <property type="entry name" value="tRNA_Ile_lys_synt_N"/>
</dbReference>
<dbReference type="NCBIfam" id="TIGR02433">
    <property type="entry name" value="lysidine_TilS_C"/>
    <property type="match status" value="1"/>
</dbReference>
<dbReference type="NCBIfam" id="TIGR02432">
    <property type="entry name" value="lysidine_TilS_N"/>
    <property type="match status" value="1"/>
</dbReference>
<dbReference type="PANTHER" id="PTHR43033">
    <property type="entry name" value="TRNA(ILE)-LYSIDINE SYNTHASE-RELATED"/>
    <property type="match status" value="1"/>
</dbReference>
<dbReference type="PANTHER" id="PTHR43033:SF1">
    <property type="entry name" value="TRNA(ILE)-LYSIDINE SYNTHASE-RELATED"/>
    <property type="match status" value="1"/>
</dbReference>
<dbReference type="Pfam" id="PF01171">
    <property type="entry name" value="ATP_bind_3"/>
    <property type="match status" value="1"/>
</dbReference>
<dbReference type="SUPFAM" id="SSF52402">
    <property type="entry name" value="Adenine nucleotide alpha hydrolases-like"/>
    <property type="match status" value="1"/>
</dbReference>